<organism>
    <name type="scientific">Pseudomonas putida (strain W619)</name>
    <dbReference type="NCBI Taxonomy" id="390235"/>
    <lineage>
        <taxon>Bacteria</taxon>
        <taxon>Pseudomonadati</taxon>
        <taxon>Pseudomonadota</taxon>
        <taxon>Gammaproteobacteria</taxon>
        <taxon>Pseudomonadales</taxon>
        <taxon>Pseudomonadaceae</taxon>
        <taxon>Pseudomonas</taxon>
    </lineage>
</organism>
<protein>
    <recommendedName>
        <fullName evidence="1">Adenylosuccinate synthetase</fullName>
        <shortName evidence="1">AMPSase</shortName>
        <shortName evidence="1">AdSS</shortName>
        <ecNumber evidence="1">6.3.4.4</ecNumber>
    </recommendedName>
    <alternativeName>
        <fullName evidence="1">IMP--aspartate ligase</fullName>
    </alternativeName>
</protein>
<keyword id="KW-0963">Cytoplasm</keyword>
<keyword id="KW-0342">GTP-binding</keyword>
<keyword id="KW-0436">Ligase</keyword>
<keyword id="KW-0460">Magnesium</keyword>
<keyword id="KW-0479">Metal-binding</keyword>
<keyword id="KW-0547">Nucleotide-binding</keyword>
<keyword id="KW-0658">Purine biosynthesis</keyword>
<dbReference type="EC" id="6.3.4.4" evidence="1"/>
<dbReference type="EMBL" id="CP000949">
    <property type="protein sequence ID" value="ACA75157.1"/>
    <property type="molecule type" value="Genomic_DNA"/>
</dbReference>
<dbReference type="SMR" id="B1JAI0"/>
<dbReference type="STRING" id="390235.PputW619_4680"/>
<dbReference type="KEGG" id="ppw:PputW619_4680"/>
<dbReference type="eggNOG" id="COG0104">
    <property type="taxonomic scope" value="Bacteria"/>
</dbReference>
<dbReference type="HOGENOM" id="CLU_029848_0_0_6"/>
<dbReference type="OrthoDB" id="9807553at2"/>
<dbReference type="UniPathway" id="UPA00075">
    <property type="reaction ID" value="UER00335"/>
</dbReference>
<dbReference type="GO" id="GO:0005737">
    <property type="term" value="C:cytoplasm"/>
    <property type="evidence" value="ECO:0007669"/>
    <property type="project" value="UniProtKB-SubCell"/>
</dbReference>
<dbReference type="GO" id="GO:0004019">
    <property type="term" value="F:adenylosuccinate synthase activity"/>
    <property type="evidence" value="ECO:0007669"/>
    <property type="project" value="UniProtKB-UniRule"/>
</dbReference>
<dbReference type="GO" id="GO:0005525">
    <property type="term" value="F:GTP binding"/>
    <property type="evidence" value="ECO:0007669"/>
    <property type="project" value="UniProtKB-UniRule"/>
</dbReference>
<dbReference type="GO" id="GO:0000287">
    <property type="term" value="F:magnesium ion binding"/>
    <property type="evidence" value="ECO:0007669"/>
    <property type="project" value="UniProtKB-UniRule"/>
</dbReference>
<dbReference type="GO" id="GO:0044208">
    <property type="term" value="P:'de novo' AMP biosynthetic process"/>
    <property type="evidence" value="ECO:0007669"/>
    <property type="project" value="UniProtKB-UniRule"/>
</dbReference>
<dbReference type="GO" id="GO:0046040">
    <property type="term" value="P:IMP metabolic process"/>
    <property type="evidence" value="ECO:0007669"/>
    <property type="project" value="TreeGrafter"/>
</dbReference>
<dbReference type="CDD" id="cd03108">
    <property type="entry name" value="AdSS"/>
    <property type="match status" value="1"/>
</dbReference>
<dbReference type="FunFam" id="1.10.300.10:FF:000001">
    <property type="entry name" value="Adenylosuccinate synthetase"/>
    <property type="match status" value="1"/>
</dbReference>
<dbReference type="FunFam" id="3.90.170.10:FF:000001">
    <property type="entry name" value="Adenylosuccinate synthetase"/>
    <property type="match status" value="1"/>
</dbReference>
<dbReference type="Gene3D" id="3.40.440.10">
    <property type="entry name" value="Adenylosuccinate Synthetase, subunit A, domain 1"/>
    <property type="match status" value="1"/>
</dbReference>
<dbReference type="Gene3D" id="1.10.300.10">
    <property type="entry name" value="Adenylosuccinate Synthetase, subunit A, domain 2"/>
    <property type="match status" value="1"/>
</dbReference>
<dbReference type="Gene3D" id="3.90.170.10">
    <property type="entry name" value="Adenylosuccinate Synthetase, subunit A, domain 3"/>
    <property type="match status" value="1"/>
</dbReference>
<dbReference type="HAMAP" id="MF_00011">
    <property type="entry name" value="Adenylosucc_synth"/>
    <property type="match status" value="1"/>
</dbReference>
<dbReference type="InterPro" id="IPR018220">
    <property type="entry name" value="Adenylosuccin_syn_GTP-bd"/>
</dbReference>
<dbReference type="InterPro" id="IPR033128">
    <property type="entry name" value="Adenylosuccin_syn_Lys_AS"/>
</dbReference>
<dbReference type="InterPro" id="IPR042109">
    <property type="entry name" value="Adenylosuccinate_synth_dom1"/>
</dbReference>
<dbReference type="InterPro" id="IPR042110">
    <property type="entry name" value="Adenylosuccinate_synth_dom2"/>
</dbReference>
<dbReference type="InterPro" id="IPR042111">
    <property type="entry name" value="Adenylosuccinate_synth_dom3"/>
</dbReference>
<dbReference type="InterPro" id="IPR001114">
    <property type="entry name" value="Adenylosuccinate_synthetase"/>
</dbReference>
<dbReference type="InterPro" id="IPR027417">
    <property type="entry name" value="P-loop_NTPase"/>
</dbReference>
<dbReference type="NCBIfam" id="NF002223">
    <property type="entry name" value="PRK01117.1"/>
    <property type="match status" value="1"/>
</dbReference>
<dbReference type="NCBIfam" id="TIGR00184">
    <property type="entry name" value="purA"/>
    <property type="match status" value="1"/>
</dbReference>
<dbReference type="PANTHER" id="PTHR11846">
    <property type="entry name" value="ADENYLOSUCCINATE SYNTHETASE"/>
    <property type="match status" value="1"/>
</dbReference>
<dbReference type="PANTHER" id="PTHR11846:SF0">
    <property type="entry name" value="ADENYLOSUCCINATE SYNTHETASE"/>
    <property type="match status" value="1"/>
</dbReference>
<dbReference type="Pfam" id="PF00709">
    <property type="entry name" value="Adenylsucc_synt"/>
    <property type="match status" value="1"/>
</dbReference>
<dbReference type="SMART" id="SM00788">
    <property type="entry name" value="Adenylsucc_synt"/>
    <property type="match status" value="1"/>
</dbReference>
<dbReference type="SUPFAM" id="SSF52540">
    <property type="entry name" value="P-loop containing nucleoside triphosphate hydrolases"/>
    <property type="match status" value="1"/>
</dbReference>
<dbReference type="PROSITE" id="PS01266">
    <property type="entry name" value="ADENYLOSUCCIN_SYN_1"/>
    <property type="match status" value="1"/>
</dbReference>
<dbReference type="PROSITE" id="PS00513">
    <property type="entry name" value="ADENYLOSUCCIN_SYN_2"/>
    <property type="match status" value="1"/>
</dbReference>
<comment type="function">
    <text evidence="1">Plays an important role in the de novo pathway of purine nucleotide biosynthesis. Catalyzes the first committed step in the biosynthesis of AMP from IMP.</text>
</comment>
<comment type="catalytic activity">
    <reaction evidence="1">
        <text>IMP + L-aspartate + GTP = N(6)-(1,2-dicarboxyethyl)-AMP + GDP + phosphate + 2 H(+)</text>
        <dbReference type="Rhea" id="RHEA:15753"/>
        <dbReference type="ChEBI" id="CHEBI:15378"/>
        <dbReference type="ChEBI" id="CHEBI:29991"/>
        <dbReference type="ChEBI" id="CHEBI:37565"/>
        <dbReference type="ChEBI" id="CHEBI:43474"/>
        <dbReference type="ChEBI" id="CHEBI:57567"/>
        <dbReference type="ChEBI" id="CHEBI:58053"/>
        <dbReference type="ChEBI" id="CHEBI:58189"/>
        <dbReference type="EC" id="6.3.4.4"/>
    </reaction>
</comment>
<comment type="cofactor">
    <cofactor evidence="1">
        <name>Mg(2+)</name>
        <dbReference type="ChEBI" id="CHEBI:18420"/>
    </cofactor>
    <text evidence="1">Binds 1 Mg(2+) ion per subunit.</text>
</comment>
<comment type="pathway">
    <text evidence="1">Purine metabolism; AMP biosynthesis via de novo pathway; AMP from IMP: step 1/2.</text>
</comment>
<comment type="subunit">
    <text evidence="1">Homodimer.</text>
</comment>
<comment type="subcellular location">
    <subcellularLocation>
        <location evidence="1">Cytoplasm</location>
    </subcellularLocation>
</comment>
<comment type="similarity">
    <text evidence="1">Belongs to the adenylosuccinate synthetase family.</text>
</comment>
<sequence length="430" mass="46706">MGKNVVVLGTQWGDEGKGKIVDLLTEHAAAVVRYQGGHNAGHTLVINGEKTVLHLIPSGILREGVQCLIGNGVVVAPDALMREITKLEEKGVPVRERLRISPAAPLILSYHVALDQAREKARGEAKIGTTGRGIGPAYEDKVARRGLRVGDLFHRERFAAKLGELLDYHNFQLVNYYKEPAIDFQQTLDECMAYAEQLKPMMLDVTAELHNLRRAGKDIMFEGAQGSLLDIDHGTYPYVTSSNTTAGGISTGSGVGPMYLDYILGITKAYTTRVGSGPFPTELFDETGATLAKRGHEFGSTTGRARRCGWFDAVILRRAIDVNSISGICLTKLDVLDGLETINICVGYKNENGAVIDAPSDADSYIGLEPVYEEMPGWSESTLGAKTLEELPAAARAYIKRIEELTGAPIDIISTGPDRNETIVLRHPFA</sequence>
<accession>B1JAI0</accession>
<proteinExistence type="inferred from homology"/>
<evidence type="ECO:0000255" key="1">
    <source>
        <dbReference type="HAMAP-Rule" id="MF_00011"/>
    </source>
</evidence>
<gene>
    <name evidence="1" type="primary">purA</name>
    <name type="ordered locus">PputW619_4680</name>
</gene>
<name>PURA_PSEPW</name>
<feature type="chain" id="PRO_1000089326" description="Adenylosuccinate synthetase">
    <location>
        <begin position="1"/>
        <end position="430"/>
    </location>
</feature>
<feature type="active site" description="Proton acceptor" evidence="1">
    <location>
        <position position="14"/>
    </location>
</feature>
<feature type="active site" description="Proton donor" evidence="1">
    <location>
        <position position="42"/>
    </location>
</feature>
<feature type="binding site" evidence="1">
    <location>
        <begin position="13"/>
        <end position="19"/>
    </location>
    <ligand>
        <name>GTP</name>
        <dbReference type="ChEBI" id="CHEBI:37565"/>
    </ligand>
</feature>
<feature type="binding site" description="in other chain" evidence="1">
    <location>
        <begin position="14"/>
        <end position="17"/>
    </location>
    <ligand>
        <name>IMP</name>
        <dbReference type="ChEBI" id="CHEBI:58053"/>
        <note>ligand shared between dimeric partners</note>
    </ligand>
</feature>
<feature type="binding site" evidence="1">
    <location>
        <position position="14"/>
    </location>
    <ligand>
        <name>Mg(2+)</name>
        <dbReference type="ChEBI" id="CHEBI:18420"/>
    </ligand>
</feature>
<feature type="binding site" description="in other chain" evidence="1">
    <location>
        <begin position="39"/>
        <end position="42"/>
    </location>
    <ligand>
        <name>IMP</name>
        <dbReference type="ChEBI" id="CHEBI:58053"/>
        <note>ligand shared between dimeric partners</note>
    </ligand>
</feature>
<feature type="binding site" evidence="1">
    <location>
        <begin position="41"/>
        <end position="43"/>
    </location>
    <ligand>
        <name>GTP</name>
        <dbReference type="ChEBI" id="CHEBI:37565"/>
    </ligand>
</feature>
<feature type="binding site" evidence="1">
    <location>
        <position position="41"/>
    </location>
    <ligand>
        <name>Mg(2+)</name>
        <dbReference type="ChEBI" id="CHEBI:18420"/>
    </ligand>
</feature>
<feature type="binding site" description="in other chain" evidence="1">
    <location>
        <position position="130"/>
    </location>
    <ligand>
        <name>IMP</name>
        <dbReference type="ChEBI" id="CHEBI:58053"/>
        <note>ligand shared between dimeric partners</note>
    </ligand>
</feature>
<feature type="binding site" evidence="1">
    <location>
        <position position="144"/>
    </location>
    <ligand>
        <name>IMP</name>
        <dbReference type="ChEBI" id="CHEBI:58053"/>
        <note>ligand shared between dimeric partners</note>
    </ligand>
</feature>
<feature type="binding site" description="in other chain" evidence="1">
    <location>
        <position position="225"/>
    </location>
    <ligand>
        <name>IMP</name>
        <dbReference type="ChEBI" id="CHEBI:58053"/>
        <note>ligand shared between dimeric partners</note>
    </ligand>
</feature>
<feature type="binding site" description="in other chain" evidence="1">
    <location>
        <position position="240"/>
    </location>
    <ligand>
        <name>IMP</name>
        <dbReference type="ChEBI" id="CHEBI:58053"/>
        <note>ligand shared between dimeric partners</note>
    </ligand>
</feature>
<feature type="binding site" evidence="1">
    <location>
        <begin position="300"/>
        <end position="306"/>
    </location>
    <ligand>
        <name>substrate</name>
    </ligand>
</feature>
<feature type="binding site" description="in other chain" evidence="1">
    <location>
        <position position="304"/>
    </location>
    <ligand>
        <name>IMP</name>
        <dbReference type="ChEBI" id="CHEBI:58053"/>
        <note>ligand shared between dimeric partners</note>
    </ligand>
</feature>
<feature type="binding site" evidence="1">
    <location>
        <position position="306"/>
    </location>
    <ligand>
        <name>GTP</name>
        <dbReference type="ChEBI" id="CHEBI:37565"/>
    </ligand>
</feature>
<feature type="binding site" evidence="1">
    <location>
        <begin position="332"/>
        <end position="334"/>
    </location>
    <ligand>
        <name>GTP</name>
        <dbReference type="ChEBI" id="CHEBI:37565"/>
    </ligand>
</feature>
<feature type="binding site" evidence="1">
    <location>
        <begin position="414"/>
        <end position="416"/>
    </location>
    <ligand>
        <name>GTP</name>
        <dbReference type="ChEBI" id="CHEBI:37565"/>
    </ligand>
</feature>
<reference key="1">
    <citation type="submission" date="2008-02" db="EMBL/GenBank/DDBJ databases">
        <title>Complete sequence of Pseudomonas putida W619.</title>
        <authorList>
            <person name="Copeland A."/>
            <person name="Lucas S."/>
            <person name="Lapidus A."/>
            <person name="Barry K."/>
            <person name="Detter J.C."/>
            <person name="Glavina del Rio T."/>
            <person name="Dalin E."/>
            <person name="Tice H."/>
            <person name="Pitluck S."/>
            <person name="Chain P."/>
            <person name="Malfatti S."/>
            <person name="Shin M."/>
            <person name="Vergez L."/>
            <person name="Schmutz J."/>
            <person name="Larimer F."/>
            <person name="Land M."/>
            <person name="Hauser L."/>
            <person name="Kyrpides N."/>
            <person name="Kim E."/>
            <person name="Taghavi S."/>
            <person name="Vangronsveld D."/>
            <person name="van der Lelie D."/>
            <person name="Richardson P."/>
        </authorList>
    </citation>
    <scope>NUCLEOTIDE SEQUENCE [LARGE SCALE GENOMIC DNA]</scope>
    <source>
        <strain>W619</strain>
    </source>
</reference>